<accession>Q935Y4</accession>
<accession>Q31K75</accession>
<name>OTC_SYNE7</name>
<proteinExistence type="inferred from homology"/>
<gene>
    <name evidence="2" type="primary">argF</name>
    <name type="ordered locus">Synpcc7942_2514</name>
    <name type="ORF">seb0012</name>
</gene>
<feature type="chain" id="PRO_0000113046" description="Ornithine carbamoyltransferase">
    <location>
        <begin position="1"/>
        <end position="305"/>
    </location>
</feature>
<feature type="binding site" evidence="2">
    <location>
        <begin position="50"/>
        <end position="53"/>
    </location>
    <ligand>
        <name>carbamoyl phosphate</name>
        <dbReference type="ChEBI" id="CHEBI:58228"/>
    </ligand>
</feature>
<feature type="binding site" evidence="2">
    <location>
        <position position="77"/>
    </location>
    <ligand>
        <name>carbamoyl phosphate</name>
        <dbReference type="ChEBI" id="CHEBI:58228"/>
    </ligand>
</feature>
<feature type="binding site" evidence="2">
    <location>
        <position position="101"/>
    </location>
    <ligand>
        <name>carbamoyl phosphate</name>
        <dbReference type="ChEBI" id="CHEBI:58228"/>
    </ligand>
</feature>
<feature type="binding site" evidence="2">
    <location>
        <begin position="128"/>
        <end position="131"/>
    </location>
    <ligand>
        <name>carbamoyl phosphate</name>
        <dbReference type="ChEBI" id="CHEBI:58228"/>
    </ligand>
</feature>
<feature type="binding site" evidence="2">
    <location>
        <position position="159"/>
    </location>
    <ligand>
        <name>L-ornithine</name>
        <dbReference type="ChEBI" id="CHEBI:46911"/>
    </ligand>
</feature>
<feature type="binding site" evidence="2">
    <location>
        <position position="222"/>
    </location>
    <ligand>
        <name>L-ornithine</name>
        <dbReference type="ChEBI" id="CHEBI:46911"/>
    </ligand>
</feature>
<feature type="binding site" evidence="2">
    <location>
        <begin position="226"/>
        <end position="227"/>
    </location>
    <ligand>
        <name>L-ornithine</name>
        <dbReference type="ChEBI" id="CHEBI:46911"/>
    </ligand>
</feature>
<feature type="binding site" evidence="2">
    <location>
        <begin position="262"/>
        <end position="263"/>
    </location>
    <ligand>
        <name>carbamoyl phosphate</name>
        <dbReference type="ChEBI" id="CHEBI:58228"/>
    </ligand>
</feature>
<feature type="binding site" evidence="2">
    <location>
        <position position="290"/>
    </location>
    <ligand>
        <name>carbamoyl phosphate</name>
        <dbReference type="ChEBI" id="CHEBI:58228"/>
    </ligand>
</feature>
<feature type="sequence conflict" description="In Ref. 1; AAL03924." evidence="3" ref="1">
    <original>Q</original>
    <variation>L</variation>
    <location>
        <position position="244"/>
    </location>
</feature>
<feature type="sequence conflict" description="In Ref. 1; AAL03924." evidence="3" ref="1">
    <original>L</original>
    <variation>M</variation>
    <location>
        <position position="249"/>
    </location>
</feature>
<reference key="1">
    <citation type="submission" date="2002-11" db="EMBL/GenBank/DDBJ databases">
        <title>Synechococcus elongatus PCC7942 genome sequence, cosmid 7H1 and 2E8.</title>
        <authorList>
            <person name="Holtman C.K."/>
            <person name="Socias T."/>
            <person name="Mohler B.J."/>
            <person name="Chen Y."/>
            <person name="Min H."/>
            <person name="Golden S.S."/>
            <person name="Youderian P."/>
            <person name="Sandoval P."/>
            <person name="Gonzalez A."/>
            <person name="Salinas I."/>
        </authorList>
    </citation>
    <scope>NUCLEOTIDE SEQUENCE [GENOMIC DNA]</scope>
</reference>
<reference key="2">
    <citation type="submission" date="2005-08" db="EMBL/GenBank/DDBJ databases">
        <title>Complete sequence of chromosome 1 of Synechococcus elongatus PCC 7942.</title>
        <authorList>
            <consortium name="US DOE Joint Genome Institute"/>
            <person name="Copeland A."/>
            <person name="Lucas S."/>
            <person name="Lapidus A."/>
            <person name="Barry K."/>
            <person name="Detter J.C."/>
            <person name="Glavina T."/>
            <person name="Hammon N."/>
            <person name="Israni S."/>
            <person name="Pitluck S."/>
            <person name="Schmutz J."/>
            <person name="Larimer F."/>
            <person name="Land M."/>
            <person name="Kyrpides N."/>
            <person name="Lykidis A."/>
            <person name="Golden S."/>
            <person name="Richardson P."/>
        </authorList>
    </citation>
    <scope>NUCLEOTIDE SEQUENCE [LARGE SCALE GENOMIC DNA]</scope>
    <source>
        <strain>ATCC 33912 / PCC 7942 / FACHB-805</strain>
    </source>
</reference>
<sequence>MGLAGRDLLTLADLSSAEVLEILELAATLKSGQTTVHCPKTLGLIFSKSSTRTRVSFSAAIMQMGGQVLDLNPNVTQVGRGEPIADTARVLSRYLDALAIRTFAQQDLEEYAHYADIPVINALTDDYHPCQILADLQTIQENFGQWQDLTLTYLGDGNNVAHSLLLGCAQVGMNVRIACPPDYQPQERIVAKAQQIAGDRAKVEILHDPIAASQGAHVLYTDVWASMGQEEEAQARVKAFTPYQLNQALLEKADPAAIVLHCLPAHREEEITAEVLEGSQSRVWDQAENRLHAQKAVLALLLGAI</sequence>
<keyword id="KW-0028">Amino-acid biosynthesis</keyword>
<keyword id="KW-0055">Arginine biosynthesis</keyword>
<keyword id="KW-0963">Cytoplasm</keyword>
<keyword id="KW-1185">Reference proteome</keyword>
<keyword id="KW-0808">Transferase</keyword>
<dbReference type="EC" id="2.1.3.3" evidence="2"/>
<dbReference type="EMBL" id="U30252">
    <property type="protein sequence ID" value="AAL03924.2"/>
    <property type="molecule type" value="Genomic_DNA"/>
</dbReference>
<dbReference type="EMBL" id="CP000100">
    <property type="protein sequence ID" value="ABB58544.1"/>
    <property type="molecule type" value="Genomic_DNA"/>
</dbReference>
<dbReference type="RefSeq" id="WP_011243902.1">
    <property type="nucleotide sequence ID" value="NZ_JACJTX010000001.1"/>
</dbReference>
<dbReference type="SMR" id="Q935Y4"/>
<dbReference type="STRING" id="1140.Synpcc7942_2514"/>
<dbReference type="PaxDb" id="1140-Synpcc7942_2514"/>
<dbReference type="GeneID" id="72431404"/>
<dbReference type="KEGG" id="syf:Synpcc7942_2514"/>
<dbReference type="eggNOG" id="COG0078">
    <property type="taxonomic scope" value="Bacteria"/>
</dbReference>
<dbReference type="HOGENOM" id="CLU_043846_3_2_3"/>
<dbReference type="OrthoDB" id="9802587at2"/>
<dbReference type="BioCyc" id="SYNEL:SYNPCC7942_2514-MONOMER"/>
<dbReference type="UniPathway" id="UPA00068">
    <property type="reaction ID" value="UER00112"/>
</dbReference>
<dbReference type="Proteomes" id="UP000889800">
    <property type="component" value="Chromosome"/>
</dbReference>
<dbReference type="GO" id="GO:0005737">
    <property type="term" value="C:cytoplasm"/>
    <property type="evidence" value="ECO:0007669"/>
    <property type="project" value="UniProtKB-SubCell"/>
</dbReference>
<dbReference type="GO" id="GO:0016597">
    <property type="term" value="F:amino acid binding"/>
    <property type="evidence" value="ECO:0007669"/>
    <property type="project" value="InterPro"/>
</dbReference>
<dbReference type="GO" id="GO:0004585">
    <property type="term" value="F:ornithine carbamoyltransferase activity"/>
    <property type="evidence" value="ECO:0007669"/>
    <property type="project" value="UniProtKB-UniRule"/>
</dbReference>
<dbReference type="GO" id="GO:0042450">
    <property type="term" value="P:arginine biosynthetic process via ornithine"/>
    <property type="evidence" value="ECO:0007669"/>
    <property type="project" value="TreeGrafter"/>
</dbReference>
<dbReference type="GO" id="GO:0019240">
    <property type="term" value="P:citrulline biosynthetic process"/>
    <property type="evidence" value="ECO:0007669"/>
    <property type="project" value="TreeGrafter"/>
</dbReference>
<dbReference type="GO" id="GO:0006526">
    <property type="term" value="P:L-arginine biosynthetic process"/>
    <property type="evidence" value="ECO:0007669"/>
    <property type="project" value="UniProtKB-UniPathway"/>
</dbReference>
<dbReference type="FunFam" id="3.40.50.1370:FF:000008">
    <property type="entry name" value="Ornithine carbamoyltransferase"/>
    <property type="match status" value="1"/>
</dbReference>
<dbReference type="Gene3D" id="3.40.50.1370">
    <property type="entry name" value="Aspartate/ornithine carbamoyltransferase"/>
    <property type="match status" value="2"/>
</dbReference>
<dbReference type="HAMAP" id="MF_01109">
    <property type="entry name" value="OTCase"/>
    <property type="match status" value="1"/>
</dbReference>
<dbReference type="InterPro" id="IPR006132">
    <property type="entry name" value="Asp/Orn_carbamoyltranf_P-bd"/>
</dbReference>
<dbReference type="InterPro" id="IPR006130">
    <property type="entry name" value="Asp/Orn_carbamoylTrfase"/>
</dbReference>
<dbReference type="InterPro" id="IPR036901">
    <property type="entry name" value="Asp/Orn_carbamoylTrfase_sf"/>
</dbReference>
<dbReference type="InterPro" id="IPR006131">
    <property type="entry name" value="Asp_carbamoyltransf_Asp/Orn-bd"/>
</dbReference>
<dbReference type="InterPro" id="IPR002292">
    <property type="entry name" value="Orn/put_carbamltrans"/>
</dbReference>
<dbReference type="InterPro" id="IPR024904">
    <property type="entry name" value="OTCase_ArgI"/>
</dbReference>
<dbReference type="NCBIfam" id="TIGR00658">
    <property type="entry name" value="orni_carb_tr"/>
    <property type="match status" value="1"/>
</dbReference>
<dbReference type="NCBIfam" id="NF001986">
    <property type="entry name" value="PRK00779.1"/>
    <property type="match status" value="1"/>
</dbReference>
<dbReference type="PANTHER" id="PTHR45753">
    <property type="entry name" value="ORNITHINE CARBAMOYLTRANSFERASE, MITOCHONDRIAL"/>
    <property type="match status" value="1"/>
</dbReference>
<dbReference type="PANTHER" id="PTHR45753:SF3">
    <property type="entry name" value="ORNITHINE TRANSCARBAMYLASE, MITOCHONDRIAL"/>
    <property type="match status" value="1"/>
</dbReference>
<dbReference type="Pfam" id="PF00185">
    <property type="entry name" value="OTCace"/>
    <property type="match status" value="1"/>
</dbReference>
<dbReference type="Pfam" id="PF02729">
    <property type="entry name" value="OTCace_N"/>
    <property type="match status" value="1"/>
</dbReference>
<dbReference type="PRINTS" id="PR00100">
    <property type="entry name" value="AOTCASE"/>
</dbReference>
<dbReference type="PRINTS" id="PR00102">
    <property type="entry name" value="OTCASE"/>
</dbReference>
<dbReference type="SUPFAM" id="SSF53671">
    <property type="entry name" value="Aspartate/ornithine carbamoyltransferase"/>
    <property type="match status" value="1"/>
</dbReference>
<dbReference type="PROSITE" id="PS00097">
    <property type="entry name" value="CARBAMOYLTRANSFERASE"/>
    <property type="match status" value="1"/>
</dbReference>
<evidence type="ECO:0000250" key="1"/>
<evidence type="ECO:0000255" key="2">
    <source>
        <dbReference type="HAMAP-Rule" id="MF_01109"/>
    </source>
</evidence>
<evidence type="ECO:0000305" key="3"/>
<comment type="function">
    <text evidence="1">Reversibly catalyzes the transfer of the carbamoyl group from carbamoyl phosphate (CP) to the N(epsilon) atom of ornithine (ORN) to produce L-citrulline.</text>
</comment>
<comment type="catalytic activity">
    <reaction evidence="2">
        <text>carbamoyl phosphate + L-ornithine = L-citrulline + phosphate + H(+)</text>
        <dbReference type="Rhea" id="RHEA:19513"/>
        <dbReference type="ChEBI" id="CHEBI:15378"/>
        <dbReference type="ChEBI" id="CHEBI:43474"/>
        <dbReference type="ChEBI" id="CHEBI:46911"/>
        <dbReference type="ChEBI" id="CHEBI:57743"/>
        <dbReference type="ChEBI" id="CHEBI:58228"/>
        <dbReference type="EC" id="2.1.3.3"/>
    </reaction>
</comment>
<comment type="pathway">
    <text evidence="2">Amino-acid biosynthesis; L-arginine biosynthesis; L-arginine from L-ornithine and carbamoyl phosphate: step 1/3.</text>
</comment>
<comment type="subcellular location">
    <subcellularLocation>
        <location evidence="2">Cytoplasm</location>
    </subcellularLocation>
</comment>
<comment type="similarity">
    <text evidence="2">Belongs to the aspartate/ornithine carbamoyltransferase superfamily. OTCase family.</text>
</comment>
<organism>
    <name type="scientific">Synechococcus elongatus (strain ATCC 33912 / PCC 7942 / FACHB-805)</name>
    <name type="common">Anacystis nidulans R2</name>
    <dbReference type="NCBI Taxonomy" id="1140"/>
    <lineage>
        <taxon>Bacteria</taxon>
        <taxon>Bacillati</taxon>
        <taxon>Cyanobacteriota</taxon>
        <taxon>Cyanophyceae</taxon>
        <taxon>Synechococcales</taxon>
        <taxon>Synechococcaceae</taxon>
        <taxon>Synechococcus</taxon>
    </lineage>
</organism>
<protein>
    <recommendedName>
        <fullName evidence="2">Ornithine carbamoyltransferase</fullName>
        <shortName evidence="2">OTCase</shortName>
        <ecNumber evidence="2">2.1.3.3</ecNumber>
    </recommendedName>
</protein>